<accession>A5GVF3</accession>
<proteinExistence type="inferred from homology"/>
<name>RPOB_SYNR3</name>
<gene>
    <name evidence="1" type="primary">rpoB</name>
    <name type="ordered locus">SynRCC307_1959</name>
</gene>
<protein>
    <recommendedName>
        <fullName evidence="1">DNA-directed RNA polymerase subunit beta</fullName>
        <shortName evidence="1">RNAP subunit beta</shortName>
        <ecNumber evidence="1">2.7.7.6</ecNumber>
    </recommendedName>
    <alternativeName>
        <fullName evidence="1">RNA polymerase subunit beta</fullName>
    </alternativeName>
    <alternativeName>
        <fullName evidence="1">Transcriptase subunit beta</fullName>
    </alternativeName>
</protein>
<evidence type="ECO:0000255" key="1">
    <source>
        <dbReference type="HAMAP-Rule" id="MF_01321"/>
    </source>
</evidence>
<evidence type="ECO:0000256" key="2">
    <source>
        <dbReference type="SAM" id="MobiDB-lite"/>
    </source>
</evidence>
<evidence type="ECO:0000305" key="3"/>
<comment type="function">
    <text evidence="1">DNA-dependent RNA polymerase catalyzes the transcription of DNA into RNA using the four ribonucleoside triphosphates as substrates.</text>
</comment>
<comment type="catalytic activity">
    <reaction evidence="1">
        <text>RNA(n) + a ribonucleoside 5'-triphosphate = RNA(n+1) + diphosphate</text>
        <dbReference type="Rhea" id="RHEA:21248"/>
        <dbReference type="Rhea" id="RHEA-COMP:14527"/>
        <dbReference type="Rhea" id="RHEA-COMP:17342"/>
        <dbReference type="ChEBI" id="CHEBI:33019"/>
        <dbReference type="ChEBI" id="CHEBI:61557"/>
        <dbReference type="ChEBI" id="CHEBI:140395"/>
        <dbReference type="EC" id="2.7.7.6"/>
    </reaction>
</comment>
<comment type="subunit">
    <text evidence="1">In cyanobacteria the RNAP catalytic core is composed of 2 alpha, 1 beta, 1 beta', 1 gamma and 1 omega subunit. When a sigma factor is associated with the core the holoenzyme is formed, which can initiate transcription.</text>
</comment>
<comment type="similarity">
    <text evidence="1">Belongs to the RNA polymerase beta chain family.</text>
</comment>
<comment type="sequence caution" evidence="3">
    <conflict type="frameshift">
        <sequence resource="EMBL-CDS" id="CAK28862"/>
    </conflict>
</comment>
<reference key="1">
    <citation type="submission" date="2006-05" db="EMBL/GenBank/DDBJ databases">
        <authorList>
            <consortium name="Genoscope"/>
        </authorList>
    </citation>
    <scope>NUCLEOTIDE SEQUENCE [LARGE SCALE GENOMIC DNA]</scope>
    <source>
        <strain>RCC307</strain>
    </source>
</reference>
<keyword id="KW-0240">DNA-directed RNA polymerase</keyword>
<keyword id="KW-0548">Nucleotidyltransferase</keyword>
<keyword id="KW-1185">Reference proteome</keyword>
<keyword id="KW-0804">Transcription</keyword>
<keyword id="KW-0808">Transferase</keyword>
<organism>
    <name type="scientific">Synechococcus sp. (strain RCC307)</name>
    <dbReference type="NCBI Taxonomy" id="316278"/>
    <lineage>
        <taxon>Bacteria</taxon>
        <taxon>Bacillati</taxon>
        <taxon>Cyanobacteriota</taxon>
        <taxon>Cyanophyceae</taxon>
        <taxon>Synechococcales</taxon>
        <taxon>Synechococcaceae</taxon>
        <taxon>Synechococcus</taxon>
    </lineage>
</organism>
<feature type="chain" id="PRO_0000329192" description="DNA-directed RNA polymerase subunit beta">
    <location>
        <begin position="1"/>
        <end position="1097"/>
    </location>
</feature>
<feature type="region of interest" description="Disordered" evidence="2">
    <location>
        <begin position="1073"/>
        <end position="1097"/>
    </location>
</feature>
<sequence length="1097" mass="122582">MSSAIQVAKTATYLPDLVEVQRGSFKWFLEKGLIEELESFSPITDYTGKLELHFVGSEYRLKRPRHDVEEAKRRDATFASQMYVTCRLVNKETGEIKEQEVFIGELPLMTERGTFIINGAERVIVNQIVRSPGVYFKDEQDKNGRRTYNASLIPNRGAWLKFETDKNDLLHVRVDKTRKINAHVMMRAIGLSDNDVLDKLRHPEYYKKSIDAANEEGISSEDQALLELYKKLRPGEPPSVSGGQQLLHSRFFDPKRYDLGRVGRYKMNKKLRLTIPDAVRTLTPEDVLSTLDYLINLELDVGGACLDDIDHLGNRRVRSVGELLQNQVRVGLNRLERIIKERMTVGETDSLTPAQLVNPKPLVAAIKEFFGSSQLSQFMDQTNPLAELTHKRRISALGPGVLTRERAGFAVRDIHPSHYGRICPIETPEGPNAGLIGSLATHARVNEYGFIETPFWKVTDGVVDKSGDPIYLSADLEDECRVAPGDVATDADGRITAELIPVRYRLDFETVPPNQVDYVQLSPVQVISVAASLIPFLEHDDANRALMGSNMQRQAVPLLRPERPLVGTGLETQVARDSGMVPITRVNGEVVFVDSTQIIVRDDQGVDHYHLLQKYQRSNQDTCLNQRPIVQQGDQVIAGQVLANGSACEGGEIALGQNCLIAYMPWEGYNYEDAILVSERLVRDDLYTSVHIEKYEIEARQTKLGPEEITREIPNVAEESLGNLDEMGIIRIGAFVESGDILVGKVTPKGESDQPPEEKLLRAIFGEKARDVRDNSLRVPNTERGRVVDVRIYTREQGDELPPGANMVVRVYVAQRRKIQVGDKMAGRHGNKGIISRILPLEDMPYLPDGTPIDIVLNPLGVPSRMNVGQVFECALMGWAADNLDSRFKIVPFDEMHGAEKSRETVEGYLKEAAKQPGREWVYDPENPGKIQLIDGRSGEPFDQPVTVGRAYILKLVHLVDDKIHARSTGPYSLVTQQPLGGKAQQGGQRLGEMEVWALEAYGAAYTLQELLTVKSDDMQGRNEALNAIVKGKPIPRPGTPESFKVLMRELQSLGLDIAVYTDEGAEVDLMQDVNPRRSTPSRPTYESLGVADYDED</sequence>
<dbReference type="EC" id="2.7.7.6" evidence="1"/>
<dbReference type="EMBL" id="CT978603">
    <property type="protein sequence ID" value="CAK28862.1"/>
    <property type="status" value="ALT_FRAME"/>
    <property type="molecule type" value="Genomic_DNA"/>
</dbReference>
<dbReference type="SMR" id="A5GVF3"/>
<dbReference type="STRING" id="316278.SynRCC307_1959"/>
<dbReference type="KEGG" id="syr:SynRCC307_1959"/>
<dbReference type="eggNOG" id="COG0085">
    <property type="taxonomic scope" value="Bacteria"/>
</dbReference>
<dbReference type="HOGENOM" id="CLU_000524_4_3_3"/>
<dbReference type="Proteomes" id="UP000001115">
    <property type="component" value="Chromosome"/>
</dbReference>
<dbReference type="GO" id="GO:0000428">
    <property type="term" value="C:DNA-directed RNA polymerase complex"/>
    <property type="evidence" value="ECO:0007669"/>
    <property type="project" value="UniProtKB-KW"/>
</dbReference>
<dbReference type="GO" id="GO:0003677">
    <property type="term" value="F:DNA binding"/>
    <property type="evidence" value="ECO:0007669"/>
    <property type="project" value="UniProtKB-UniRule"/>
</dbReference>
<dbReference type="GO" id="GO:0003899">
    <property type="term" value="F:DNA-directed RNA polymerase activity"/>
    <property type="evidence" value="ECO:0007669"/>
    <property type="project" value="UniProtKB-UniRule"/>
</dbReference>
<dbReference type="GO" id="GO:0032549">
    <property type="term" value="F:ribonucleoside binding"/>
    <property type="evidence" value="ECO:0007669"/>
    <property type="project" value="InterPro"/>
</dbReference>
<dbReference type="GO" id="GO:0006351">
    <property type="term" value="P:DNA-templated transcription"/>
    <property type="evidence" value="ECO:0007669"/>
    <property type="project" value="UniProtKB-UniRule"/>
</dbReference>
<dbReference type="CDD" id="cd00653">
    <property type="entry name" value="RNA_pol_B_RPB2"/>
    <property type="match status" value="1"/>
</dbReference>
<dbReference type="FunFam" id="3.90.1800.10:FF:000001">
    <property type="entry name" value="DNA-directed RNA polymerase subunit beta"/>
    <property type="match status" value="1"/>
</dbReference>
<dbReference type="Gene3D" id="2.40.50.100">
    <property type="match status" value="1"/>
</dbReference>
<dbReference type="Gene3D" id="2.40.50.150">
    <property type="match status" value="1"/>
</dbReference>
<dbReference type="Gene3D" id="3.90.1100.10">
    <property type="match status" value="1"/>
</dbReference>
<dbReference type="Gene3D" id="2.30.150.10">
    <property type="entry name" value="DNA-directed RNA polymerase, beta subunit, external 1 domain"/>
    <property type="match status" value="1"/>
</dbReference>
<dbReference type="Gene3D" id="2.40.270.10">
    <property type="entry name" value="DNA-directed RNA polymerase, subunit 2, domain 6"/>
    <property type="match status" value="1"/>
</dbReference>
<dbReference type="Gene3D" id="3.90.1800.10">
    <property type="entry name" value="RNA polymerase alpha subunit dimerisation domain"/>
    <property type="match status" value="1"/>
</dbReference>
<dbReference type="Gene3D" id="3.90.1110.10">
    <property type="entry name" value="RNA polymerase Rpb2, domain 2"/>
    <property type="match status" value="1"/>
</dbReference>
<dbReference type="HAMAP" id="MF_01321">
    <property type="entry name" value="RNApol_bact_RpoB"/>
    <property type="match status" value="1"/>
</dbReference>
<dbReference type="InterPro" id="IPR042107">
    <property type="entry name" value="DNA-dir_RNA_pol_bsu_ext_1_sf"/>
</dbReference>
<dbReference type="InterPro" id="IPR019462">
    <property type="entry name" value="DNA-dir_RNA_pol_bsu_external_1"/>
</dbReference>
<dbReference type="InterPro" id="IPR015712">
    <property type="entry name" value="DNA-dir_RNA_pol_su2"/>
</dbReference>
<dbReference type="InterPro" id="IPR007120">
    <property type="entry name" value="DNA-dir_RNAP_su2_dom"/>
</dbReference>
<dbReference type="InterPro" id="IPR037033">
    <property type="entry name" value="DNA-dir_RNAP_su2_hyb_sf"/>
</dbReference>
<dbReference type="InterPro" id="IPR010243">
    <property type="entry name" value="RNA_pol_bsu_bac"/>
</dbReference>
<dbReference type="InterPro" id="IPR007121">
    <property type="entry name" value="RNA_pol_bsu_CS"/>
</dbReference>
<dbReference type="InterPro" id="IPR007644">
    <property type="entry name" value="RNA_pol_bsu_protrusion"/>
</dbReference>
<dbReference type="InterPro" id="IPR007642">
    <property type="entry name" value="RNA_pol_Rpb2_2"/>
</dbReference>
<dbReference type="InterPro" id="IPR037034">
    <property type="entry name" value="RNA_pol_Rpb2_2_sf"/>
</dbReference>
<dbReference type="InterPro" id="IPR007645">
    <property type="entry name" value="RNA_pol_Rpb2_3"/>
</dbReference>
<dbReference type="InterPro" id="IPR007641">
    <property type="entry name" value="RNA_pol_Rpb2_7"/>
</dbReference>
<dbReference type="InterPro" id="IPR014724">
    <property type="entry name" value="RNA_pol_RPB2_OB-fold"/>
</dbReference>
<dbReference type="NCBIfam" id="NF001616">
    <property type="entry name" value="PRK00405.1"/>
    <property type="match status" value="1"/>
</dbReference>
<dbReference type="NCBIfam" id="TIGR02013">
    <property type="entry name" value="rpoB"/>
    <property type="match status" value="1"/>
</dbReference>
<dbReference type="PANTHER" id="PTHR20856">
    <property type="entry name" value="DNA-DIRECTED RNA POLYMERASE I SUBUNIT 2"/>
    <property type="match status" value="1"/>
</dbReference>
<dbReference type="Pfam" id="PF04563">
    <property type="entry name" value="RNA_pol_Rpb2_1"/>
    <property type="match status" value="1"/>
</dbReference>
<dbReference type="Pfam" id="PF04561">
    <property type="entry name" value="RNA_pol_Rpb2_2"/>
    <property type="match status" value="1"/>
</dbReference>
<dbReference type="Pfam" id="PF04565">
    <property type="entry name" value="RNA_pol_Rpb2_3"/>
    <property type="match status" value="1"/>
</dbReference>
<dbReference type="Pfam" id="PF10385">
    <property type="entry name" value="RNA_pol_Rpb2_45"/>
    <property type="match status" value="1"/>
</dbReference>
<dbReference type="Pfam" id="PF00562">
    <property type="entry name" value="RNA_pol_Rpb2_6"/>
    <property type="match status" value="1"/>
</dbReference>
<dbReference type="Pfam" id="PF04560">
    <property type="entry name" value="RNA_pol_Rpb2_7"/>
    <property type="match status" value="1"/>
</dbReference>
<dbReference type="SUPFAM" id="SSF64484">
    <property type="entry name" value="beta and beta-prime subunits of DNA dependent RNA-polymerase"/>
    <property type="match status" value="1"/>
</dbReference>
<dbReference type="PROSITE" id="PS01166">
    <property type="entry name" value="RNA_POL_BETA"/>
    <property type="match status" value="1"/>
</dbReference>